<comment type="function">
    <text evidence="3">Catalyzes the inactivation of reactive sulfate esters in carcinogenic arylmethanols (PubMed:2114406). Highest activity towards ethacrynic acid and cumene hydroperoxide (PubMed:2114406).</text>
</comment>
<comment type="catalytic activity">
    <reaction evidence="3">
        <text>RX + glutathione = an S-substituted glutathione + a halide anion + H(+)</text>
        <dbReference type="Rhea" id="RHEA:16437"/>
        <dbReference type="ChEBI" id="CHEBI:15378"/>
        <dbReference type="ChEBI" id="CHEBI:16042"/>
        <dbReference type="ChEBI" id="CHEBI:17792"/>
        <dbReference type="ChEBI" id="CHEBI:57925"/>
        <dbReference type="ChEBI" id="CHEBI:90779"/>
        <dbReference type="EC" id="2.5.1.18"/>
    </reaction>
</comment>
<comment type="subunit">
    <text evidence="3">Homodimer.</text>
</comment>
<comment type="subcellular location">
    <subcellularLocation>
        <location evidence="4">Cytoplasm</location>
        <location evidence="4">Cytosol</location>
    </subcellularLocation>
    <subcellularLocation>
        <location evidence="4">Nucleus</location>
    </subcellularLocation>
</comment>
<comment type="tissue specificity">
    <text evidence="4">Highest values found in liver followed by testis, adrenal gland, kidney, lung, brain and skeletal muscle. In liver, highest expression found in central vein limiting plate hepatocytes. In lung, expressed mainly in club cells of the bronchiolar epithelium and, at low levels, in type II alveolar cells.</text>
</comment>
<comment type="similarity">
    <text evidence="5">Belongs to the GST superfamily. Theta family.</text>
</comment>
<reference key="1">
    <citation type="journal article" date="1991" name="Biochem. Biophys. Res. Commun.">
        <title>Molecular cloning and amino acid sequencing of rat liver class theta glutathione S-transferase Yrs-Yrs inactivating reactive sulfate esters of carcinogenic arylmethanols.</title>
        <authorList>
            <person name="Ogura K."/>
            <person name="Nishiyama T."/>
            <person name="Okada T."/>
            <person name="Kajita J."/>
            <person name="Narihata H."/>
            <person name="Watabe T."/>
            <person name="Hiratsuka A."/>
            <person name="Watabe T."/>
        </authorList>
    </citation>
    <scope>NUCLEOTIDE SEQUENCE [MRNA]</scope>
    <scope>PARTIAL PROTEIN SEQUENCE</scope>
    <source>
        <strain>Sprague-Dawley</strain>
        <tissue>Liver</tissue>
    </source>
</reference>
<reference key="2">
    <citation type="journal article" date="1994" name="Biochem. Biophys. Res. Commun.">
        <title>Isolation and characterization of the gene encoding rat class theta glutathione S-transferase subunit yrs.</title>
        <authorList>
            <person name="Ogura K."/>
            <person name="Nishiyama T."/>
            <person name="Hiratsuka A."/>
            <person name="Watabe T."/>
            <person name="Watabe T."/>
        </authorList>
    </citation>
    <scope>NUCLEOTIDE SEQUENCE [GENOMIC DNA]</scope>
    <source>
        <strain>Sprague-Dawley</strain>
        <tissue>Liver</tissue>
    </source>
</reference>
<reference key="3">
    <citation type="journal article" date="2004" name="Genome Res.">
        <title>The status, quality, and expansion of the NIH full-length cDNA project: the Mammalian Gene Collection (MGC).</title>
        <authorList>
            <consortium name="The MGC Project Team"/>
        </authorList>
    </citation>
    <scope>NUCLEOTIDE SEQUENCE [LARGE SCALE MRNA]</scope>
    <source>
        <tissue>Prostate</tissue>
    </source>
</reference>
<reference key="4">
    <citation type="journal article" date="1990" name="J. Biol. Chem.">
        <title>A new class of rat glutathione S-transferase Yrs-Yrs inactivating reactive sulfate esters as metabolites of carcinogenic arylmethanols.</title>
        <authorList>
            <person name="Hiratsuka A."/>
            <person name="Sebata N."/>
            <person name="Kawashima K."/>
            <person name="Okuda H."/>
            <person name="Ogura K."/>
            <person name="Watabe T."/>
            <person name="Satoh K."/>
            <person name="Hatayama I."/>
            <person name="Tsuchida S."/>
            <person name="Ishikawa T."/>
            <person name="Sato K."/>
        </authorList>
    </citation>
    <scope>PROTEIN SEQUENCE OF 2-26</scope>
    <scope>FUNCTION</scope>
    <scope>CATALYTIC ACTIVITY</scope>
    <scope>SUBUNIT</scope>
    <source>
        <strain>Sprague-Dawley</strain>
        <tissue>Liver</tissue>
    </source>
</reference>
<reference key="5">
    <citation type="journal article" date="1991" name="Biochem. J.">
        <title>Theta, a new class of glutathione transferases purified from rat and man.</title>
        <authorList>
            <person name="Meyer D.J."/>
            <person name="Coles B."/>
            <person name="Pemble S.E."/>
            <person name="Gilmore K.S."/>
            <person name="Fraser G.M."/>
            <person name="Ketterer B."/>
        </authorList>
    </citation>
    <scope>PROTEIN SEQUENCE OF 2-47; 140-162; 222-234 AND 238-244</scope>
    <source>
        <tissue>Liver</tissue>
    </source>
</reference>
<reference key="6">
    <citation type="journal article" date="1996" name="Biochem. J.">
        <title>The distribution of theta-class glutathione S-transferases in the liver and lung of mouse, rat and human.</title>
        <authorList>
            <person name="Mainwaring G.W."/>
            <person name="Williams S.M."/>
            <person name="Foster J.R."/>
            <person name="Tugwood J."/>
            <person name="Green T."/>
        </authorList>
    </citation>
    <scope>TISSUE SPECIFICITY</scope>
    <scope>SUBCELLULAR LOCATION</scope>
    <source>
        <tissue>Liver</tissue>
        <tissue>Lung</tissue>
    </source>
</reference>
<protein>
    <recommendedName>
        <fullName>Glutathione S-transferase theta-2</fullName>
        <ecNumber evidence="3">2.5.1.18</ecNumber>
    </recommendedName>
    <alternativeName>
        <fullName>GST 12-12</fullName>
    </alternativeName>
    <alternativeName>
        <fullName>GST class-theta-2</fullName>
    </alternativeName>
    <alternativeName>
        <fullName>Glutathione S-transferase 12</fullName>
    </alternativeName>
    <alternativeName>
        <fullName>Glutathione S-transferase Yrs-Yrs</fullName>
    </alternativeName>
</protein>
<proteinExistence type="evidence at protein level"/>
<gene>
    <name type="primary">Gstt2</name>
</gene>
<organism>
    <name type="scientific">Rattus norvegicus</name>
    <name type="common">Rat</name>
    <dbReference type="NCBI Taxonomy" id="10116"/>
    <lineage>
        <taxon>Eukaryota</taxon>
        <taxon>Metazoa</taxon>
        <taxon>Chordata</taxon>
        <taxon>Craniata</taxon>
        <taxon>Vertebrata</taxon>
        <taxon>Euteleostomi</taxon>
        <taxon>Mammalia</taxon>
        <taxon>Eutheria</taxon>
        <taxon>Euarchontoglires</taxon>
        <taxon>Glires</taxon>
        <taxon>Rodentia</taxon>
        <taxon>Myomorpha</taxon>
        <taxon>Muroidea</taxon>
        <taxon>Muridae</taxon>
        <taxon>Murinae</taxon>
        <taxon>Rattus</taxon>
    </lineage>
</organism>
<keyword id="KW-0963">Cytoplasm</keyword>
<keyword id="KW-0903">Direct protein sequencing</keyword>
<keyword id="KW-0539">Nucleus</keyword>
<keyword id="KW-1185">Reference proteome</keyword>
<keyword id="KW-0808">Transferase</keyword>
<sequence>MGLELYLDLLSQPSRAVYIFAKKNGIPFQLRTVDLLKGQHLSEQFSQVNCLKKVPVLKDGSFVLTESTAILIYLSSKYQVADHWYPADLQARAQVHEYLGWHADNIRGTFGVLLWTKVLGPLIGVQVPEEKVERNRNSMVLALQRLEDKFLRDRAFIAGQQVTLADLMSLEELIQPVALGCNLFEGRPQLTAWRERVEAFLGAELCQEAHNPIMSVLGQAAKKTLPVPPPEAHASMMLRIARIP</sequence>
<name>GSTT2_RAT</name>
<feature type="initiator methionine" description="Removed" evidence="2 3">
    <location>
        <position position="1"/>
    </location>
</feature>
<feature type="chain" id="PRO_0000185943" description="Glutathione S-transferase theta-2">
    <location>
        <begin position="2"/>
        <end position="244"/>
    </location>
</feature>
<feature type="domain" description="GST N-terminal">
    <location>
        <begin position="2"/>
        <end position="82"/>
    </location>
</feature>
<feature type="domain" description="GST C-terminal">
    <location>
        <begin position="88"/>
        <end position="230"/>
    </location>
</feature>
<feature type="binding site" evidence="1">
    <location>
        <begin position="40"/>
        <end position="41"/>
    </location>
    <ligand>
        <name>glutathione</name>
        <dbReference type="ChEBI" id="CHEBI:57925"/>
    </ligand>
</feature>
<feature type="binding site" evidence="1">
    <location>
        <begin position="53"/>
        <end position="54"/>
    </location>
    <ligand>
        <name>glutathione</name>
        <dbReference type="ChEBI" id="CHEBI:57925"/>
    </ligand>
</feature>
<feature type="binding site" evidence="1">
    <location>
        <begin position="66"/>
        <end position="67"/>
    </location>
    <ligand>
        <name>glutathione</name>
        <dbReference type="ChEBI" id="CHEBI:57925"/>
    </ligand>
</feature>
<feature type="binding site" evidence="1">
    <location>
        <begin position="104"/>
        <end position="107"/>
    </location>
    <ligand>
        <name>glutathione</name>
        <dbReference type="ChEBI" id="CHEBI:57925"/>
    </ligand>
</feature>
<feature type="sequence conflict" description="In Ref. 5; AA sequence." evidence="5" ref="5">
    <original>S</original>
    <variation>C</variation>
    <location>
        <position position="14"/>
    </location>
</feature>
<feature type="sequence conflict" description="In Ref. 5; AA sequence." evidence="5" ref="5">
    <original>LK</original>
    <variation>RC</variation>
    <location>
        <begin position="36"/>
        <end position="37"/>
    </location>
</feature>
<feature type="sequence conflict" description="In Ref. 5; AA sequence." evidence="5" ref="5">
    <original>S</original>
    <variation>C</variation>
    <location>
        <position position="42"/>
    </location>
</feature>
<feature type="sequence conflict" description="In Ref. 5; AA sequence." evidence="5" ref="5">
    <location>
        <position position="44"/>
    </location>
</feature>
<accession>P30713</accession>
<accession>P36971</accession>
<evidence type="ECO:0000250" key="1">
    <source>
        <dbReference type="UniProtKB" id="P0CG30"/>
    </source>
</evidence>
<evidence type="ECO:0000269" key="2">
    <source>
    </source>
</evidence>
<evidence type="ECO:0000269" key="3">
    <source>
    </source>
</evidence>
<evidence type="ECO:0000269" key="4">
    <source>
    </source>
</evidence>
<evidence type="ECO:0000305" key="5"/>
<dbReference type="EC" id="2.5.1.18" evidence="3"/>
<dbReference type="EMBL" id="D10026">
    <property type="protein sequence ID" value="BAA00916.1"/>
    <property type="molecule type" value="mRNA"/>
</dbReference>
<dbReference type="EMBL" id="D38556">
    <property type="protein sequence ID" value="BAA07559.1"/>
    <property type="molecule type" value="Genomic_DNA"/>
</dbReference>
<dbReference type="EMBL" id="BC061856">
    <property type="protein sequence ID" value="AAH61856.1"/>
    <property type="molecule type" value="mRNA"/>
</dbReference>
<dbReference type="PIR" id="JC2425">
    <property type="entry name" value="JC2425"/>
</dbReference>
<dbReference type="PIR" id="S14346">
    <property type="entry name" value="S14346"/>
</dbReference>
<dbReference type="RefSeq" id="NP_036928.1">
    <property type="nucleotide sequence ID" value="NM_012796.2"/>
</dbReference>
<dbReference type="SMR" id="P30713"/>
<dbReference type="FunCoup" id="P30713">
    <property type="interactions" value="227"/>
</dbReference>
<dbReference type="STRING" id="10116.ENSRNOP00000071112"/>
<dbReference type="iPTMnet" id="P30713"/>
<dbReference type="PhosphoSitePlus" id="P30713"/>
<dbReference type="PaxDb" id="10116-ENSRNOP00000033158"/>
<dbReference type="GeneID" id="29487"/>
<dbReference type="KEGG" id="rno:29487"/>
<dbReference type="UCSC" id="RGD:69362">
    <property type="organism name" value="rat"/>
</dbReference>
<dbReference type="AGR" id="RGD:69362"/>
<dbReference type="CTD" id="2953"/>
<dbReference type="RGD" id="69362">
    <property type="gene designation" value="Gstt2"/>
</dbReference>
<dbReference type="VEuPathDB" id="HostDB:ENSRNOG00000052415"/>
<dbReference type="eggNOG" id="KOG0867">
    <property type="taxonomic scope" value="Eukaryota"/>
</dbReference>
<dbReference type="HOGENOM" id="CLU_011226_2_0_1"/>
<dbReference type="InParanoid" id="P30713"/>
<dbReference type="OMA" id="YFRTIWL"/>
<dbReference type="OrthoDB" id="65835at9989"/>
<dbReference type="PhylomeDB" id="P30713"/>
<dbReference type="TreeFam" id="TF325759"/>
<dbReference type="Reactome" id="R-RNO-156590">
    <property type="pathway name" value="Glutathione conjugation"/>
</dbReference>
<dbReference type="PRO" id="PR:P30713"/>
<dbReference type="Proteomes" id="UP000002494">
    <property type="component" value="Chromosome 20"/>
</dbReference>
<dbReference type="Bgee" id="ENSRNOG00000052415">
    <property type="expression patterns" value="Expressed in liver and 18 other cell types or tissues"/>
</dbReference>
<dbReference type="ExpressionAtlas" id="P30713">
    <property type="expression patterns" value="baseline and differential"/>
</dbReference>
<dbReference type="GO" id="GO:0005737">
    <property type="term" value="C:cytoplasm"/>
    <property type="evidence" value="ECO:0000318"/>
    <property type="project" value="GO_Central"/>
</dbReference>
<dbReference type="GO" id="GO:0005829">
    <property type="term" value="C:cytosol"/>
    <property type="evidence" value="ECO:0000266"/>
    <property type="project" value="RGD"/>
</dbReference>
<dbReference type="GO" id="GO:0005634">
    <property type="term" value="C:nucleus"/>
    <property type="evidence" value="ECO:0007669"/>
    <property type="project" value="UniProtKB-SubCell"/>
</dbReference>
<dbReference type="GO" id="GO:0004602">
    <property type="term" value="F:glutathione peroxidase activity"/>
    <property type="evidence" value="ECO:0000314"/>
    <property type="project" value="RGD"/>
</dbReference>
<dbReference type="GO" id="GO:0004364">
    <property type="term" value="F:glutathione transferase activity"/>
    <property type="evidence" value="ECO:0000314"/>
    <property type="project" value="UniProtKB"/>
</dbReference>
<dbReference type="GO" id="GO:0006749">
    <property type="term" value="P:glutathione metabolic process"/>
    <property type="evidence" value="ECO:0000314"/>
    <property type="project" value="MGI"/>
</dbReference>
<dbReference type="GO" id="GO:0009751">
    <property type="term" value="P:response to salicylic acid"/>
    <property type="evidence" value="ECO:0000270"/>
    <property type="project" value="RGD"/>
</dbReference>
<dbReference type="CDD" id="cd03183">
    <property type="entry name" value="GST_C_Theta"/>
    <property type="match status" value="1"/>
</dbReference>
<dbReference type="CDD" id="cd03050">
    <property type="entry name" value="GST_N_Theta"/>
    <property type="match status" value="1"/>
</dbReference>
<dbReference type="FunFam" id="3.40.30.10:FF:000086">
    <property type="entry name" value="Glutathione S-transferase theta-1"/>
    <property type="match status" value="1"/>
</dbReference>
<dbReference type="FunFam" id="1.20.1050.10:FF:000200">
    <property type="entry name" value="Glutathione S-transferase theta-2B"/>
    <property type="match status" value="1"/>
</dbReference>
<dbReference type="Gene3D" id="1.20.1050.10">
    <property type="match status" value="1"/>
</dbReference>
<dbReference type="Gene3D" id="3.40.30.10">
    <property type="entry name" value="Glutaredoxin"/>
    <property type="match status" value="1"/>
</dbReference>
<dbReference type="InterPro" id="IPR010987">
    <property type="entry name" value="Glutathione-S-Trfase_C-like"/>
</dbReference>
<dbReference type="InterPro" id="IPR036282">
    <property type="entry name" value="Glutathione-S-Trfase_C_sf"/>
</dbReference>
<dbReference type="InterPro" id="IPR040079">
    <property type="entry name" value="Glutathione_S-Trfase"/>
</dbReference>
<dbReference type="InterPro" id="IPR004045">
    <property type="entry name" value="Glutathione_S-Trfase_N"/>
</dbReference>
<dbReference type="InterPro" id="IPR004046">
    <property type="entry name" value="GST_C"/>
</dbReference>
<dbReference type="InterPro" id="IPR040077">
    <property type="entry name" value="GST_C_Theta"/>
</dbReference>
<dbReference type="InterPro" id="IPR040075">
    <property type="entry name" value="GST_N_Theta"/>
</dbReference>
<dbReference type="InterPro" id="IPR051369">
    <property type="entry name" value="GST_Theta"/>
</dbReference>
<dbReference type="InterPro" id="IPR036249">
    <property type="entry name" value="Thioredoxin-like_sf"/>
</dbReference>
<dbReference type="PANTHER" id="PTHR43917">
    <property type="match status" value="1"/>
</dbReference>
<dbReference type="PANTHER" id="PTHR43917:SF4">
    <property type="entry name" value="GLUTATHIONE S-TRANSFERASE THETA-2-RELATED"/>
    <property type="match status" value="1"/>
</dbReference>
<dbReference type="Pfam" id="PF00043">
    <property type="entry name" value="GST_C"/>
    <property type="match status" value="1"/>
</dbReference>
<dbReference type="Pfam" id="PF02798">
    <property type="entry name" value="GST_N"/>
    <property type="match status" value="1"/>
</dbReference>
<dbReference type="SFLD" id="SFLDS00019">
    <property type="entry name" value="Glutathione_Transferase_(cytos"/>
    <property type="match status" value="1"/>
</dbReference>
<dbReference type="SFLD" id="SFLDG00358">
    <property type="entry name" value="Main_(cytGST)"/>
    <property type="match status" value="1"/>
</dbReference>
<dbReference type="SUPFAM" id="SSF47616">
    <property type="entry name" value="GST C-terminal domain-like"/>
    <property type="match status" value="1"/>
</dbReference>
<dbReference type="SUPFAM" id="SSF52833">
    <property type="entry name" value="Thioredoxin-like"/>
    <property type="match status" value="1"/>
</dbReference>
<dbReference type="PROSITE" id="PS50405">
    <property type="entry name" value="GST_CTER"/>
    <property type="match status" value="1"/>
</dbReference>
<dbReference type="PROSITE" id="PS50404">
    <property type="entry name" value="GST_NTER"/>
    <property type="match status" value="1"/>
</dbReference>